<name>RIMK_COXBN</name>
<evidence type="ECO:0000255" key="1">
    <source>
        <dbReference type="HAMAP-Rule" id="MF_01552"/>
    </source>
</evidence>
<proteinExistence type="inferred from homology"/>
<protein>
    <recommendedName>
        <fullName evidence="1">Probable alpha-L-glutamate ligase</fullName>
        <ecNumber evidence="1">6.3.2.-</ecNumber>
    </recommendedName>
</protein>
<dbReference type="EC" id="6.3.2.-" evidence="1"/>
<dbReference type="EMBL" id="CP000733">
    <property type="protein sequence ID" value="ABS76518.1"/>
    <property type="molecule type" value="Genomic_DNA"/>
</dbReference>
<dbReference type="RefSeq" id="WP_005769646.1">
    <property type="nucleotide sequence ID" value="NC_009727.1"/>
</dbReference>
<dbReference type="SMR" id="A9KDN5"/>
<dbReference type="KEGG" id="cbd:CBUD_0386"/>
<dbReference type="HOGENOM" id="CLU_054353_0_1_6"/>
<dbReference type="Proteomes" id="UP000008555">
    <property type="component" value="Chromosome"/>
</dbReference>
<dbReference type="GO" id="GO:0005737">
    <property type="term" value="C:cytoplasm"/>
    <property type="evidence" value="ECO:0007669"/>
    <property type="project" value="TreeGrafter"/>
</dbReference>
<dbReference type="GO" id="GO:0005524">
    <property type="term" value="F:ATP binding"/>
    <property type="evidence" value="ECO:0007669"/>
    <property type="project" value="UniProtKB-UniRule"/>
</dbReference>
<dbReference type="GO" id="GO:0046872">
    <property type="term" value="F:metal ion binding"/>
    <property type="evidence" value="ECO:0007669"/>
    <property type="project" value="UniProtKB-KW"/>
</dbReference>
<dbReference type="GO" id="GO:0018169">
    <property type="term" value="F:ribosomal S6-glutamic acid ligase activity"/>
    <property type="evidence" value="ECO:0007669"/>
    <property type="project" value="TreeGrafter"/>
</dbReference>
<dbReference type="GO" id="GO:0036211">
    <property type="term" value="P:protein modification process"/>
    <property type="evidence" value="ECO:0007669"/>
    <property type="project" value="InterPro"/>
</dbReference>
<dbReference type="GO" id="GO:0009432">
    <property type="term" value="P:SOS response"/>
    <property type="evidence" value="ECO:0007669"/>
    <property type="project" value="TreeGrafter"/>
</dbReference>
<dbReference type="GO" id="GO:0006412">
    <property type="term" value="P:translation"/>
    <property type="evidence" value="ECO:0007669"/>
    <property type="project" value="UniProtKB-KW"/>
</dbReference>
<dbReference type="FunFam" id="3.40.50.20:FF:000004">
    <property type="entry name" value="Probable alpha-L-glutamate ligase"/>
    <property type="match status" value="1"/>
</dbReference>
<dbReference type="FunFam" id="3.30.1490.20:FF:000005">
    <property type="entry name" value="Probable alpha-L-glutamate ligase 1"/>
    <property type="match status" value="1"/>
</dbReference>
<dbReference type="FunFam" id="3.30.470.20:FF:000016">
    <property type="entry name" value="Ribosomal protein S6--L-glutamate ligase"/>
    <property type="match status" value="1"/>
</dbReference>
<dbReference type="Gene3D" id="3.40.50.20">
    <property type="match status" value="1"/>
</dbReference>
<dbReference type="Gene3D" id="3.30.1490.20">
    <property type="entry name" value="ATP-grasp fold, A domain"/>
    <property type="match status" value="1"/>
</dbReference>
<dbReference type="Gene3D" id="3.30.470.20">
    <property type="entry name" value="ATP-grasp fold, B domain"/>
    <property type="match status" value="1"/>
</dbReference>
<dbReference type="HAMAP" id="MF_01552">
    <property type="entry name" value="RimK"/>
    <property type="match status" value="1"/>
</dbReference>
<dbReference type="InterPro" id="IPR011761">
    <property type="entry name" value="ATP-grasp"/>
</dbReference>
<dbReference type="InterPro" id="IPR013651">
    <property type="entry name" value="ATP-grasp_RimK-type"/>
</dbReference>
<dbReference type="InterPro" id="IPR013815">
    <property type="entry name" value="ATP_grasp_subdomain_1"/>
</dbReference>
<dbReference type="InterPro" id="IPR023533">
    <property type="entry name" value="RimK"/>
</dbReference>
<dbReference type="InterPro" id="IPR041107">
    <property type="entry name" value="Rimk_N"/>
</dbReference>
<dbReference type="InterPro" id="IPR004666">
    <property type="entry name" value="Rp_bS6_RimK/Lys_biosynth_LsyX"/>
</dbReference>
<dbReference type="NCBIfam" id="NF007764">
    <property type="entry name" value="PRK10446.1"/>
    <property type="match status" value="1"/>
</dbReference>
<dbReference type="NCBIfam" id="TIGR00768">
    <property type="entry name" value="rimK_fam"/>
    <property type="match status" value="1"/>
</dbReference>
<dbReference type="PANTHER" id="PTHR21621:SF7">
    <property type="entry name" value="RIBOSOMAL PROTEIN BS6--L-GLUTAMATE LIGASE"/>
    <property type="match status" value="1"/>
</dbReference>
<dbReference type="PANTHER" id="PTHR21621">
    <property type="entry name" value="RIBOSOMAL PROTEIN S6 MODIFICATION PROTEIN"/>
    <property type="match status" value="1"/>
</dbReference>
<dbReference type="Pfam" id="PF08443">
    <property type="entry name" value="RimK"/>
    <property type="match status" value="1"/>
</dbReference>
<dbReference type="Pfam" id="PF18030">
    <property type="entry name" value="Rimk_N"/>
    <property type="match status" value="1"/>
</dbReference>
<dbReference type="SUPFAM" id="SSF56059">
    <property type="entry name" value="Glutathione synthetase ATP-binding domain-like"/>
    <property type="match status" value="1"/>
</dbReference>
<dbReference type="PROSITE" id="PS50975">
    <property type="entry name" value="ATP_GRASP"/>
    <property type="match status" value="1"/>
</dbReference>
<accession>A9KDN5</accession>
<sequence>MKIAILSTKQELSSTQRLKEAALARGHKVKIINTLRCYMSLSQEKPTIHYMGKELARYDAVIPRIGASITFYGTAVVRQFEMMGTFCLNSSMSITRSRDKFRSLQFLSRKGIDLPITGFAHSPDDIEDLIQMVGGTPLIIKLIEGTQGIGVVLAETKKAAESVIQAFLGLKVNILIQEFIGETQGRDIRCFVIGNKVVATMQREARPGDFRSNVHRGGTTKLIKITPQEREISINAAKALGLNVAGVDLLRSKRGPLVLEVNSSPGLEGIENITKKDIAGMIIEFIEKNAKPIKAYSRYQG</sequence>
<comment type="cofactor">
    <cofactor evidence="1">
        <name>Mg(2+)</name>
        <dbReference type="ChEBI" id="CHEBI:18420"/>
    </cofactor>
    <cofactor evidence="1">
        <name>Mn(2+)</name>
        <dbReference type="ChEBI" id="CHEBI:29035"/>
    </cofactor>
    <text evidence="1">Binds 2 magnesium or manganese ions per subunit.</text>
</comment>
<comment type="similarity">
    <text evidence="1">Belongs to the RimK family.</text>
</comment>
<organism>
    <name type="scientific">Coxiella burnetii (strain Dugway 5J108-111)</name>
    <dbReference type="NCBI Taxonomy" id="434922"/>
    <lineage>
        <taxon>Bacteria</taxon>
        <taxon>Pseudomonadati</taxon>
        <taxon>Pseudomonadota</taxon>
        <taxon>Gammaproteobacteria</taxon>
        <taxon>Legionellales</taxon>
        <taxon>Coxiellaceae</taxon>
        <taxon>Coxiella</taxon>
    </lineage>
</organism>
<reference key="1">
    <citation type="journal article" date="2009" name="Infect. Immun.">
        <title>Comparative genomics reveal extensive transposon-mediated genomic plasticity and diversity among potential effector proteins within the genus Coxiella.</title>
        <authorList>
            <person name="Beare P.A."/>
            <person name="Unsworth N."/>
            <person name="Andoh M."/>
            <person name="Voth D.E."/>
            <person name="Omsland A."/>
            <person name="Gilk S.D."/>
            <person name="Williams K.P."/>
            <person name="Sobral B.W."/>
            <person name="Kupko J.J. III"/>
            <person name="Porcella S.F."/>
            <person name="Samuel J.E."/>
            <person name="Heinzen R.A."/>
        </authorList>
    </citation>
    <scope>NUCLEOTIDE SEQUENCE [LARGE SCALE GENOMIC DNA]</scope>
    <source>
        <strain>Dugway 5J108-111</strain>
    </source>
</reference>
<feature type="chain" id="PRO_1000087743" description="Probable alpha-L-glutamate ligase">
    <location>
        <begin position="1"/>
        <end position="301"/>
    </location>
</feature>
<feature type="domain" description="ATP-grasp" evidence="1">
    <location>
        <begin position="104"/>
        <end position="287"/>
    </location>
</feature>
<feature type="binding site" evidence="1">
    <location>
        <position position="141"/>
    </location>
    <ligand>
        <name>ATP</name>
        <dbReference type="ChEBI" id="CHEBI:30616"/>
    </ligand>
</feature>
<feature type="binding site" evidence="1">
    <location>
        <begin position="178"/>
        <end position="179"/>
    </location>
    <ligand>
        <name>ATP</name>
        <dbReference type="ChEBI" id="CHEBI:30616"/>
    </ligand>
</feature>
<feature type="binding site" evidence="1">
    <location>
        <position position="187"/>
    </location>
    <ligand>
        <name>ATP</name>
        <dbReference type="ChEBI" id="CHEBI:30616"/>
    </ligand>
</feature>
<feature type="binding site" evidence="1">
    <location>
        <begin position="211"/>
        <end position="213"/>
    </location>
    <ligand>
        <name>ATP</name>
        <dbReference type="ChEBI" id="CHEBI:30616"/>
    </ligand>
</feature>
<feature type="binding site" evidence="1">
    <location>
        <position position="248"/>
    </location>
    <ligand>
        <name>Mg(2+)</name>
        <dbReference type="ChEBI" id="CHEBI:18420"/>
        <label>1</label>
    </ligand>
</feature>
<feature type="binding site" evidence="1">
    <location>
        <position position="248"/>
    </location>
    <ligand>
        <name>Mn(2+)</name>
        <dbReference type="ChEBI" id="CHEBI:29035"/>
        <label>1</label>
    </ligand>
</feature>
<feature type="binding site" evidence="1">
    <location>
        <position position="260"/>
    </location>
    <ligand>
        <name>Mg(2+)</name>
        <dbReference type="ChEBI" id="CHEBI:18420"/>
        <label>1</label>
    </ligand>
</feature>
<feature type="binding site" evidence="1">
    <location>
        <position position="260"/>
    </location>
    <ligand>
        <name>Mg(2+)</name>
        <dbReference type="ChEBI" id="CHEBI:18420"/>
        <label>2</label>
    </ligand>
</feature>
<feature type="binding site" evidence="1">
    <location>
        <position position="260"/>
    </location>
    <ligand>
        <name>Mn(2+)</name>
        <dbReference type="ChEBI" id="CHEBI:29035"/>
        <label>1</label>
    </ligand>
</feature>
<feature type="binding site" evidence="1">
    <location>
        <position position="260"/>
    </location>
    <ligand>
        <name>Mn(2+)</name>
        <dbReference type="ChEBI" id="CHEBI:29035"/>
        <label>2</label>
    </ligand>
</feature>
<feature type="binding site" evidence="1">
    <location>
        <position position="262"/>
    </location>
    <ligand>
        <name>Mg(2+)</name>
        <dbReference type="ChEBI" id="CHEBI:18420"/>
        <label>2</label>
    </ligand>
</feature>
<feature type="binding site" evidence="1">
    <location>
        <position position="262"/>
    </location>
    <ligand>
        <name>Mn(2+)</name>
        <dbReference type="ChEBI" id="CHEBI:29035"/>
        <label>2</label>
    </ligand>
</feature>
<gene>
    <name evidence="1" type="primary">rimK</name>
    <name type="ordered locus">CBUD_0386</name>
</gene>
<keyword id="KW-0067">ATP-binding</keyword>
<keyword id="KW-0436">Ligase</keyword>
<keyword id="KW-0460">Magnesium</keyword>
<keyword id="KW-0464">Manganese</keyword>
<keyword id="KW-0479">Metal-binding</keyword>
<keyword id="KW-0547">Nucleotide-binding</keyword>
<keyword id="KW-0648">Protein biosynthesis</keyword>